<proteinExistence type="predicted"/>
<keyword id="KW-0814">Transposable element</keyword>
<evidence type="ECO:0000256" key="1">
    <source>
        <dbReference type="SAM" id="MobiDB-lite"/>
    </source>
</evidence>
<feature type="chain" id="PRO_0000075532" description="Insertion element ISR1 uncharacterized 11 kDa protein A1">
    <location>
        <begin position="1"/>
        <end position="93"/>
    </location>
</feature>
<feature type="region of interest" description="Disordered" evidence="1">
    <location>
        <begin position="14"/>
        <end position="33"/>
    </location>
</feature>
<feature type="region of interest" description="Disordered" evidence="1">
    <location>
        <begin position="68"/>
        <end position="93"/>
    </location>
</feature>
<protein>
    <recommendedName>
        <fullName>Insertion element ISR1 uncharacterized 11 kDa protein A1</fullName>
    </recommendedName>
</protein>
<reference key="1">
    <citation type="journal article" date="1989" name="Plasmid">
        <title>ISR1, a transposable DNA sequence resident in Rhizobium class IV strains, shows structural characteristics of classical insertion elements.</title>
        <authorList>
            <person name="Priefer U.B."/>
            <person name="Kalinowski J."/>
            <person name="Rueger B."/>
            <person name="Heumann W."/>
            <person name="Puehler A."/>
        </authorList>
    </citation>
    <scope>NUCLEOTIDE SEQUENCE [GENOMIC DNA]</scope>
    <source>
        <strain>Class IV strains</strain>
    </source>
</reference>
<sequence>MFWASIGRACAIRRRARTTRSARPAEGPGQERRRFGYRRLHVLLRREGHAVNRKRVQRIYRDEQLTVRRRAPQASDGHAATVTCRWRPTSAGR</sequence>
<organism>
    <name type="scientific">Rhizobium sp</name>
    <dbReference type="NCBI Taxonomy" id="391"/>
    <lineage>
        <taxon>Bacteria</taxon>
        <taxon>Pseudomonadati</taxon>
        <taxon>Pseudomonadota</taxon>
        <taxon>Alphaproteobacteria</taxon>
        <taxon>Hyphomicrobiales</taxon>
        <taxon>Rhizobiaceae</taxon>
        <taxon>Rhizobium/Agrobacterium group</taxon>
        <taxon>Rhizobium</taxon>
    </lineage>
</organism>
<accession>P17983</accession>
<name>YIA1_RHISP</name>
<dbReference type="EMBL" id="X06616">
    <property type="protein sequence ID" value="CAA29831.1"/>
    <property type="molecule type" value="Genomic_DNA"/>
</dbReference>
<dbReference type="PIR" id="S09660">
    <property type="entry name" value="S09660"/>
</dbReference>
<dbReference type="SMR" id="P17983"/>
<dbReference type="InterPro" id="IPR025948">
    <property type="entry name" value="HTH-like_dom"/>
</dbReference>
<dbReference type="PANTHER" id="PTHR47515:SF1">
    <property type="entry name" value="BLR2054 PROTEIN"/>
    <property type="match status" value="1"/>
</dbReference>
<dbReference type="PANTHER" id="PTHR47515">
    <property type="entry name" value="LOW CALCIUM RESPONSE LOCUS PROTEIN T"/>
    <property type="match status" value="1"/>
</dbReference>
<dbReference type="Pfam" id="PF13276">
    <property type="entry name" value="HTH_21"/>
    <property type="match status" value="1"/>
</dbReference>